<evidence type="ECO:0000250" key="1"/>
<evidence type="ECO:0000250" key="2">
    <source>
        <dbReference type="UniProtKB" id="P0A9P4"/>
    </source>
</evidence>
<evidence type="ECO:0000305" key="3"/>
<name>TRXB_CHLTR</name>
<protein>
    <recommendedName>
        <fullName>Thioredoxin reductase</fullName>
        <shortName>TRXR</shortName>
        <ecNumber>1.8.1.9</ecNumber>
    </recommendedName>
</protein>
<feature type="chain" id="PRO_0000166726" description="Thioredoxin reductase">
    <location>
        <begin position="1"/>
        <end position="312"/>
    </location>
</feature>
<feature type="binding site" evidence="2">
    <location>
        <begin position="33"/>
        <end position="43"/>
    </location>
    <ligand>
        <name>FAD</name>
        <dbReference type="ChEBI" id="CHEBI:57692"/>
    </ligand>
</feature>
<feature type="binding site" evidence="2">
    <location>
        <begin position="283"/>
        <end position="292"/>
    </location>
    <ligand>
        <name>FAD</name>
        <dbReference type="ChEBI" id="CHEBI:57692"/>
    </ligand>
</feature>
<feature type="disulfide bond" description="Redox-active" evidence="2">
    <location>
        <begin position="138"/>
        <end position="141"/>
    </location>
</feature>
<keyword id="KW-0963">Cytoplasm</keyword>
<keyword id="KW-1015">Disulfide bond</keyword>
<keyword id="KW-0274">FAD</keyword>
<keyword id="KW-0285">Flavoprotein</keyword>
<keyword id="KW-0521">NADP</keyword>
<keyword id="KW-0560">Oxidoreductase</keyword>
<keyword id="KW-0676">Redox-active center</keyword>
<keyword id="KW-1185">Reference proteome</keyword>
<dbReference type="EC" id="1.8.1.9"/>
<dbReference type="EMBL" id="AE001273">
    <property type="protein sequence ID" value="AAC67690.1"/>
    <property type="status" value="ALT_INIT"/>
    <property type="molecule type" value="Genomic_DNA"/>
</dbReference>
<dbReference type="PIR" id="B71556">
    <property type="entry name" value="B71556"/>
</dbReference>
<dbReference type="RefSeq" id="NP_219602.1">
    <property type="nucleotide sequence ID" value="NC_000117.1"/>
</dbReference>
<dbReference type="RefSeq" id="WP_009871447.1">
    <property type="nucleotide sequence ID" value="NC_000117.1"/>
</dbReference>
<dbReference type="SMR" id="O84101"/>
<dbReference type="FunCoup" id="O84101">
    <property type="interactions" value="169"/>
</dbReference>
<dbReference type="STRING" id="272561.CT_099"/>
<dbReference type="EnsemblBacteria" id="AAC67690">
    <property type="protein sequence ID" value="AAC67690"/>
    <property type="gene ID" value="CT_099"/>
</dbReference>
<dbReference type="GeneID" id="884181"/>
<dbReference type="KEGG" id="ctr:CT_099"/>
<dbReference type="PATRIC" id="fig|272561.5.peg.109"/>
<dbReference type="HOGENOM" id="CLU_031864_5_1_0"/>
<dbReference type="InParanoid" id="O84101"/>
<dbReference type="OrthoDB" id="9806179at2"/>
<dbReference type="Proteomes" id="UP000000431">
    <property type="component" value="Chromosome"/>
</dbReference>
<dbReference type="GO" id="GO:0005737">
    <property type="term" value="C:cytoplasm"/>
    <property type="evidence" value="ECO:0007669"/>
    <property type="project" value="UniProtKB-SubCell"/>
</dbReference>
<dbReference type="GO" id="GO:0004791">
    <property type="term" value="F:thioredoxin-disulfide reductase (NADPH) activity"/>
    <property type="evidence" value="ECO:0000318"/>
    <property type="project" value="GO_Central"/>
</dbReference>
<dbReference type="GO" id="GO:0045454">
    <property type="term" value="P:cell redox homeostasis"/>
    <property type="evidence" value="ECO:0000318"/>
    <property type="project" value="GO_Central"/>
</dbReference>
<dbReference type="GO" id="GO:0019430">
    <property type="term" value="P:removal of superoxide radicals"/>
    <property type="evidence" value="ECO:0007669"/>
    <property type="project" value="InterPro"/>
</dbReference>
<dbReference type="Gene3D" id="3.50.50.60">
    <property type="entry name" value="FAD/NAD(P)-binding domain"/>
    <property type="match status" value="2"/>
</dbReference>
<dbReference type="InterPro" id="IPR036188">
    <property type="entry name" value="FAD/NAD-bd_sf"/>
</dbReference>
<dbReference type="InterPro" id="IPR023753">
    <property type="entry name" value="FAD/NAD-binding_dom"/>
</dbReference>
<dbReference type="InterPro" id="IPR050097">
    <property type="entry name" value="Ferredoxin-NADP_redctase_2"/>
</dbReference>
<dbReference type="InterPro" id="IPR008255">
    <property type="entry name" value="Pyr_nucl-diS_OxRdtase_2_AS"/>
</dbReference>
<dbReference type="InterPro" id="IPR005982">
    <property type="entry name" value="Thioredox_Rdtase"/>
</dbReference>
<dbReference type="NCBIfam" id="TIGR01292">
    <property type="entry name" value="TRX_reduct"/>
    <property type="match status" value="1"/>
</dbReference>
<dbReference type="PANTHER" id="PTHR48105">
    <property type="entry name" value="THIOREDOXIN REDUCTASE 1-RELATED-RELATED"/>
    <property type="match status" value="1"/>
</dbReference>
<dbReference type="Pfam" id="PF07992">
    <property type="entry name" value="Pyr_redox_2"/>
    <property type="match status" value="1"/>
</dbReference>
<dbReference type="PRINTS" id="PR00368">
    <property type="entry name" value="FADPNR"/>
</dbReference>
<dbReference type="PRINTS" id="PR00469">
    <property type="entry name" value="PNDRDTASEII"/>
</dbReference>
<dbReference type="SUPFAM" id="SSF51905">
    <property type="entry name" value="FAD/NAD(P)-binding domain"/>
    <property type="match status" value="1"/>
</dbReference>
<dbReference type="PROSITE" id="PS00573">
    <property type="entry name" value="PYRIDINE_REDOX_2"/>
    <property type="match status" value="1"/>
</dbReference>
<proteinExistence type="inferred from homology"/>
<organism>
    <name type="scientific">Chlamydia trachomatis serovar D (strain ATCC VR-885 / DSM 19411 / UW-3/Cx)</name>
    <dbReference type="NCBI Taxonomy" id="272561"/>
    <lineage>
        <taxon>Bacteria</taxon>
        <taxon>Pseudomonadati</taxon>
        <taxon>Chlamydiota</taxon>
        <taxon>Chlamydiia</taxon>
        <taxon>Chlamydiales</taxon>
        <taxon>Chlamydiaceae</taxon>
        <taxon>Chlamydia/Chlamydophila group</taxon>
        <taxon>Chlamydia</taxon>
    </lineage>
</organism>
<accession>O84101</accession>
<gene>
    <name type="primary">trxB</name>
    <name type="ordered locus">CT_099</name>
</gene>
<reference key="1">
    <citation type="journal article" date="1998" name="Science">
        <title>Genome sequence of an obligate intracellular pathogen of humans: Chlamydia trachomatis.</title>
        <authorList>
            <person name="Stephens R.S."/>
            <person name="Kalman S."/>
            <person name="Lammel C.J."/>
            <person name="Fan J."/>
            <person name="Marathe R."/>
            <person name="Aravind L."/>
            <person name="Mitchell W.P."/>
            <person name="Olinger L."/>
            <person name="Tatusov R.L."/>
            <person name="Zhao Q."/>
            <person name="Koonin E.V."/>
            <person name="Davis R.W."/>
        </authorList>
    </citation>
    <scope>NUCLEOTIDE SEQUENCE [LARGE SCALE GENOMIC DNA]</scope>
    <source>
        <strain>ATCC VR-885 / DSM 19411 / UW-3/Cx</strain>
    </source>
</reference>
<sequence>MTHAKLVIIGSGPAGYTAAIYASRALLTPVLFEGFFSGIAGGQLMTTTEVENFPGFPEGVLGHQLMDLMKTQAQRFGTQVLSKDITAVDFSVRPFVLKSGKETFTCDACIIATGASAKRLSIPGAGDNEFWQKGVTACAVCDGASPIFRDKDLFVVGGGDSALEEAMFLTRYGKRVFVVHRRDTLRASKVMVNKAQANEKIFFLWNSEIVKISGDTLVRSIDIYNNVDETTTTMEAAGVFFAIGHQPNTAFLGGQVALDENGYIITEKGSSRTSVPGVFAAGDVQDKYYRQAITSAGSGCMAALDAERFLEN</sequence>
<comment type="catalytic activity">
    <reaction>
        <text>[thioredoxin]-dithiol + NADP(+) = [thioredoxin]-disulfide + NADPH + H(+)</text>
        <dbReference type="Rhea" id="RHEA:20345"/>
        <dbReference type="Rhea" id="RHEA-COMP:10698"/>
        <dbReference type="Rhea" id="RHEA-COMP:10700"/>
        <dbReference type="ChEBI" id="CHEBI:15378"/>
        <dbReference type="ChEBI" id="CHEBI:29950"/>
        <dbReference type="ChEBI" id="CHEBI:50058"/>
        <dbReference type="ChEBI" id="CHEBI:57783"/>
        <dbReference type="ChEBI" id="CHEBI:58349"/>
        <dbReference type="EC" id="1.8.1.9"/>
    </reaction>
</comment>
<comment type="cofactor">
    <cofactor evidence="2">
        <name>FAD</name>
        <dbReference type="ChEBI" id="CHEBI:57692"/>
    </cofactor>
    <text evidence="2">Binds 1 FAD per subunit.</text>
</comment>
<comment type="subunit">
    <text evidence="2">Homodimer.</text>
</comment>
<comment type="subcellular location">
    <subcellularLocation>
        <location evidence="1">Cytoplasm</location>
    </subcellularLocation>
</comment>
<comment type="miscellaneous">
    <text>The active site is a redox-active disulfide bond.</text>
</comment>
<comment type="similarity">
    <text evidence="3">Belongs to the class-II pyridine nucleotide-disulfide oxidoreductase family.</text>
</comment>
<comment type="sequence caution" evidence="3">
    <conflict type="erroneous initiation">
        <sequence resource="EMBL-CDS" id="AAC67690"/>
    </conflict>
</comment>